<comment type="function">
    <text evidence="1">The heterodimer acts as both an ATP-dependent DNA helicase and an ATP-dependent, dual-direction single-stranded exonuclease. Recognizes the chi site generating a DNA molecule suitable for the initiation of homologous recombination. The AddB subunit has 5' -&gt; 3' nuclease activity but not helicase activity.</text>
</comment>
<comment type="cofactor">
    <cofactor evidence="1">
        <name>Mg(2+)</name>
        <dbReference type="ChEBI" id="CHEBI:18420"/>
    </cofactor>
</comment>
<comment type="cofactor">
    <cofactor evidence="1">
        <name>[4Fe-4S] cluster</name>
        <dbReference type="ChEBI" id="CHEBI:49883"/>
    </cofactor>
    <text evidence="1">Binds 1 [4Fe-4S] cluster.</text>
</comment>
<comment type="subunit">
    <text evidence="1">Heterodimer of AddA and AddB.</text>
</comment>
<comment type="miscellaneous">
    <text evidence="1">Despite having conserved helicase domains, this subunit does not have helicase activity.</text>
</comment>
<comment type="similarity">
    <text evidence="1">Belongs to the helicase family. AddB/RexB type 1 subfamily.</text>
</comment>
<gene>
    <name evidence="1" type="primary">addB</name>
    <name type="ordered locus">CPE0020</name>
</gene>
<protein>
    <recommendedName>
        <fullName evidence="1">ATP-dependent helicase/deoxyribonuclease subunit B</fullName>
        <ecNumber evidence="1">3.1.-.-</ecNumber>
    </recommendedName>
    <alternativeName>
        <fullName evidence="1">ATP-dependent helicase/nuclease subunit AddB</fullName>
    </alternativeName>
</protein>
<proteinExistence type="inferred from homology"/>
<evidence type="ECO:0000255" key="1">
    <source>
        <dbReference type="HAMAP-Rule" id="MF_01452"/>
    </source>
</evidence>
<keyword id="KW-0004">4Fe-4S</keyword>
<keyword id="KW-0067">ATP-binding</keyword>
<keyword id="KW-0227">DNA damage</keyword>
<keyword id="KW-0234">DNA repair</keyword>
<keyword id="KW-0238">DNA-binding</keyword>
<keyword id="KW-0269">Exonuclease</keyword>
<keyword id="KW-0347">Helicase</keyword>
<keyword id="KW-0378">Hydrolase</keyword>
<keyword id="KW-0408">Iron</keyword>
<keyword id="KW-0411">Iron-sulfur</keyword>
<keyword id="KW-0479">Metal-binding</keyword>
<keyword id="KW-0540">Nuclease</keyword>
<keyword id="KW-0547">Nucleotide-binding</keyword>
<keyword id="KW-1185">Reference proteome</keyword>
<reference key="1">
    <citation type="journal article" date="2002" name="Proc. Natl. Acad. Sci. U.S.A.">
        <title>Complete genome sequence of Clostridium perfringens, an anaerobic flesh-eater.</title>
        <authorList>
            <person name="Shimizu T."/>
            <person name="Ohtani K."/>
            <person name="Hirakawa H."/>
            <person name="Ohshima K."/>
            <person name="Yamashita A."/>
            <person name="Shiba T."/>
            <person name="Ogasawara N."/>
            <person name="Hattori M."/>
            <person name="Kuhara S."/>
            <person name="Hayashi H."/>
        </authorList>
    </citation>
    <scope>NUCLEOTIDE SEQUENCE [LARGE SCALE GENOMIC DNA]</scope>
    <source>
        <strain>13 / Type A</strain>
    </source>
</reference>
<sequence>MGLKIIYGRAGTGKSTFCINQIKKKINNSPNNKLILLVPEQFTFQTENKVLSAIGERYVLNAEVLSFKRLAHNVFNECGGATRTIMGDAGKSMLIFKVLEDLGDNMTVFKNASRQKGFIDIASKTITEFKKYNVNNEVLDLTINEIEDENLKMKMEELKDVFNEFNSRLHEGYVDEEDQLLLLNEKLDGCSLYDGAEIWIDEFSSFTPNQLSVIGKLLKRAKSVNITLSIDEVNSLKGESDLFVATKNTEKRLMNLIQEEGIAFSGYINLNEDIPYRFKENKELAHIERQLYAYPFKQYRGKNNSLRLYRANNNYDEIEFVAKDILRLVREKQYRFKDISVICRDVDNYEKVVSAIFSEYEIPYYIDKKIDIASNPLIVFINSAVDIISKNWTYESMFKYLKTGLIKEFRGIEGAELIDELENYVLAYGIKGKKWMEEWVNYSSSILKEEEISEENKQRLERLNDIRETIVTPLDEFNKQCKGKKTLKEFATILYEFLDSKLDIMDTLDKYVDYFKENDMAIEAKEYSEVRDIFIDVLEQAVDVLGNEVMDLNEFMKVLNIGLSQYEMGLIPVALDQVNIGDITRIKSRGTKALYIIGVNDGVLPSASKEEGILSDNDREILLEKGISLASDTRTKIFEEQFLVYTAFTIAEEYLVVTYPLADFEGKSQRPSIIVHRLKKILPNVKEESEGFKLVDDKYEKISAKIPTLNELMIAIRKNYDGAEIEDYWKYVYDWYLREPKWKERIEYVRKGLEYTNLENNISKEKAKKLYEDNKNKISLSVSRLERYAQCPFAYYIQYGLKAKDRKIYEFTAPDLGSFMHEILDEFTNEIKEKDLKWSDLSKENCRNIINSLVDNQVKNNKSSILNSSKRYSYFTDRFKRILTKSVMVISEQMKRSDFEIYKNELAFGFSKDVNSIKLDLPSGESFYLNGRIDRVDKLNLDGETYLRIIDYKTGSKKFDLNKFYNGLQMQLLVYLDALINNSENIVENQAMPGAILYFRIDDPILKSKGDLTEEEIKSEVLKELKLEGLLLDDVKVVKAMDNTLEPGTHSLIIPANMKKAGDLGKNKALITMEQFELLRKYVNEKMVEICQNMIEGKIDIEPCKENKNIVCDYCNYSHICQFDSSLEDNRYKVIPKKKDEDIWKSINEKVGGEVNGD</sequence>
<accession>Q8XPE3</accession>
<organism>
    <name type="scientific">Clostridium perfringens (strain 13 / Type A)</name>
    <dbReference type="NCBI Taxonomy" id="195102"/>
    <lineage>
        <taxon>Bacteria</taxon>
        <taxon>Bacillati</taxon>
        <taxon>Bacillota</taxon>
        <taxon>Clostridia</taxon>
        <taxon>Eubacteriales</taxon>
        <taxon>Clostridiaceae</taxon>
        <taxon>Clostridium</taxon>
    </lineage>
</organism>
<dbReference type="EC" id="3.1.-.-" evidence="1"/>
<dbReference type="EMBL" id="BA000016">
    <property type="protein sequence ID" value="BAB79726.1"/>
    <property type="molecule type" value="Genomic_DNA"/>
</dbReference>
<dbReference type="RefSeq" id="WP_011009571.1">
    <property type="nucleotide sequence ID" value="NC_003366.1"/>
</dbReference>
<dbReference type="SMR" id="Q8XPE3"/>
<dbReference type="STRING" id="195102.gene:10489248"/>
<dbReference type="KEGG" id="cpe:CPE0020"/>
<dbReference type="HOGENOM" id="CLU_007838_0_0_9"/>
<dbReference type="Proteomes" id="UP000000818">
    <property type="component" value="Chromosome"/>
</dbReference>
<dbReference type="GO" id="GO:0051539">
    <property type="term" value="F:4 iron, 4 sulfur cluster binding"/>
    <property type="evidence" value="ECO:0007669"/>
    <property type="project" value="UniProtKB-KW"/>
</dbReference>
<dbReference type="GO" id="GO:0008409">
    <property type="term" value="F:5'-3' exonuclease activity"/>
    <property type="evidence" value="ECO:0007669"/>
    <property type="project" value="UniProtKB-UniRule"/>
</dbReference>
<dbReference type="GO" id="GO:0005524">
    <property type="term" value="F:ATP binding"/>
    <property type="evidence" value="ECO:0007669"/>
    <property type="project" value="UniProtKB-UniRule"/>
</dbReference>
<dbReference type="GO" id="GO:0003690">
    <property type="term" value="F:double-stranded DNA binding"/>
    <property type="evidence" value="ECO:0007669"/>
    <property type="project" value="UniProtKB-UniRule"/>
</dbReference>
<dbReference type="GO" id="GO:0004386">
    <property type="term" value="F:helicase activity"/>
    <property type="evidence" value="ECO:0007669"/>
    <property type="project" value="UniProtKB-KW"/>
</dbReference>
<dbReference type="GO" id="GO:0046872">
    <property type="term" value="F:metal ion binding"/>
    <property type="evidence" value="ECO:0007669"/>
    <property type="project" value="UniProtKB-KW"/>
</dbReference>
<dbReference type="GO" id="GO:0000724">
    <property type="term" value="P:double-strand break repair via homologous recombination"/>
    <property type="evidence" value="ECO:0007669"/>
    <property type="project" value="UniProtKB-UniRule"/>
</dbReference>
<dbReference type="Gene3D" id="3.90.320.10">
    <property type="match status" value="1"/>
</dbReference>
<dbReference type="Gene3D" id="6.10.140.1030">
    <property type="match status" value="1"/>
</dbReference>
<dbReference type="Gene3D" id="3.40.50.300">
    <property type="entry name" value="P-loop containing nucleotide triphosphate hydrolases"/>
    <property type="match status" value="3"/>
</dbReference>
<dbReference type="HAMAP" id="MF_01452">
    <property type="entry name" value="AddB_type1"/>
    <property type="match status" value="1"/>
</dbReference>
<dbReference type="InterPro" id="IPR049035">
    <property type="entry name" value="ADDB_N"/>
</dbReference>
<dbReference type="InterPro" id="IPR014140">
    <property type="entry name" value="DNA_helicase_suAddB"/>
</dbReference>
<dbReference type="InterPro" id="IPR027417">
    <property type="entry name" value="P-loop_NTPase"/>
</dbReference>
<dbReference type="InterPro" id="IPR011604">
    <property type="entry name" value="PDDEXK-like_dom_sf"/>
</dbReference>
<dbReference type="InterPro" id="IPR038726">
    <property type="entry name" value="PDDEXK_AddAB-type"/>
</dbReference>
<dbReference type="InterPro" id="IPR011335">
    <property type="entry name" value="Restrct_endonuc-II-like"/>
</dbReference>
<dbReference type="NCBIfam" id="TIGR02773">
    <property type="entry name" value="addB_Gpos"/>
    <property type="match status" value="1"/>
</dbReference>
<dbReference type="PANTHER" id="PTHR30591">
    <property type="entry name" value="RECBCD ENZYME SUBUNIT RECC"/>
    <property type="match status" value="1"/>
</dbReference>
<dbReference type="PANTHER" id="PTHR30591:SF1">
    <property type="entry name" value="RECBCD ENZYME SUBUNIT RECC"/>
    <property type="match status" value="1"/>
</dbReference>
<dbReference type="Pfam" id="PF21445">
    <property type="entry name" value="ADDB_N"/>
    <property type="match status" value="1"/>
</dbReference>
<dbReference type="Pfam" id="PF12705">
    <property type="entry name" value="PDDEXK_1"/>
    <property type="match status" value="1"/>
</dbReference>
<dbReference type="SUPFAM" id="SSF52540">
    <property type="entry name" value="P-loop containing nucleoside triphosphate hydrolases"/>
    <property type="match status" value="2"/>
</dbReference>
<dbReference type="SUPFAM" id="SSF52980">
    <property type="entry name" value="Restriction endonuclease-like"/>
    <property type="match status" value="1"/>
</dbReference>
<feature type="chain" id="PRO_0000379180" description="ATP-dependent helicase/deoxyribonuclease subunit B">
    <location>
        <begin position="1"/>
        <end position="1158"/>
    </location>
</feature>
<feature type="binding site" evidence="1">
    <location>
        <begin position="8"/>
        <end position="15"/>
    </location>
    <ligand>
        <name>ATP</name>
        <dbReference type="ChEBI" id="CHEBI:30616"/>
    </ligand>
</feature>
<feature type="binding site" evidence="1">
    <location>
        <position position="791"/>
    </location>
    <ligand>
        <name>[4Fe-4S] cluster</name>
        <dbReference type="ChEBI" id="CHEBI:49883"/>
    </ligand>
</feature>
<feature type="binding site" evidence="1">
    <location>
        <position position="1112"/>
    </location>
    <ligand>
        <name>[4Fe-4S] cluster</name>
        <dbReference type="ChEBI" id="CHEBI:49883"/>
    </ligand>
</feature>
<feature type="binding site" evidence="1">
    <location>
        <position position="1115"/>
    </location>
    <ligand>
        <name>[4Fe-4S] cluster</name>
        <dbReference type="ChEBI" id="CHEBI:49883"/>
    </ligand>
</feature>
<feature type="binding site" evidence="1">
    <location>
        <position position="1121"/>
    </location>
    <ligand>
        <name>[4Fe-4S] cluster</name>
        <dbReference type="ChEBI" id="CHEBI:49883"/>
    </ligand>
</feature>
<name>ADDB_CLOPE</name>